<accession>Q1X6Y7</accession>
<evidence type="ECO:0000250" key="1"/>
<evidence type="ECO:0000255" key="2"/>
<evidence type="ECO:0000256" key="3">
    <source>
        <dbReference type="SAM" id="MobiDB-lite"/>
    </source>
</evidence>
<evidence type="ECO:0000305" key="4"/>
<dbReference type="EMBL" id="AY988051">
    <property type="protein sequence ID" value="AAY44258.1"/>
    <property type="molecule type" value="Genomic_DNA"/>
</dbReference>
<dbReference type="SMR" id="Q1X6Y7"/>
<dbReference type="GlyCosmos" id="Q1X6Y7">
    <property type="glycosylation" value="1 site, No reported glycans"/>
</dbReference>
<dbReference type="GO" id="GO:0030424">
    <property type="term" value="C:axon"/>
    <property type="evidence" value="ECO:0007669"/>
    <property type="project" value="TreeGrafter"/>
</dbReference>
<dbReference type="GO" id="GO:0030425">
    <property type="term" value="C:dendrite"/>
    <property type="evidence" value="ECO:0007669"/>
    <property type="project" value="TreeGrafter"/>
</dbReference>
<dbReference type="GO" id="GO:0005615">
    <property type="term" value="C:extracellular space"/>
    <property type="evidence" value="ECO:0007669"/>
    <property type="project" value="TreeGrafter"/>
</dbReference>
<dbReference type="GO" id="GO:0008021">
    <property type="term" value="C:synaptic vesicle"/>
    <property type="evidence" value="ECO:0007669"/>
    <property type="project" value="TreeGrafter"/>
</dbReference>
<dbReference type="GO" id="GO:0008083">
    <property type="term" value="F:growth factor activity"/>
    <property type="evidence" value="ECO:0007669"/>
    <property type="project" value="UniProtKB-KW"/>
</dbReference>
<dbReference type="GO" id="GO:0005163">
    <property type="term" value="F:nerve growth factor receptor binding"/>
    <property type="evidence" value="ECO:0007669"/>
    <property type="project" value="TreeGrafter"/>
</dbReference>
<dbReference type="GO" id="GO:0007169">
    <property type="term" value="P:cell surface receptor protein tyrosine kinase signaling pathway"/>
    <property type="evidence" value="ECO:0007669"/>
    <property type="project" value="TreeGrafter"/>
</dbReference>
<dbReference type="GO" id="GO:0050804">
    <property type="term" value="P:modulation of chemical synaptic transmission"/>
    <property type="evidence" value="ECO:0007669"/>
    <property type="project" value="TreeGrafter"/>
</dbReference>
<dbReference type="GO" id="GO:0043524">
    <property type="term" value="P:negative regulation of neuron apoptotic process"/>
    <property type="evidence" value="ECO:0007669"/>
    <property type="project" value="TreeGrafter"/>
</dbReference>
<dbReference type="GO" id="GO:0021675">
    <property type="term" value="P:nerve development"/>
    <property type="evidence" value="ECO:0007669"/>
    <property type="project" value="TreeGrafter"/>
</dbReference>
<dbReference type="GO" id="GO:0038180">
    <property type="term" value="P:nerve growth factor signaling pathway"/>
    <property type="evidence" value="ECO:0007669"/>
    <property type="project" value="TreeGrafter"/>
</dbReference>
<dbReference type="GO" id="GO:0048812">
    <property type="term" value="P:neuron projection morphogenesis"/>
    <property type="evidence" value="ECO:0007669"/>
    <property type="project" value="TreeGrafter"/>
</dbReference>
<dbReference type="Gene3D" id="2.10.90.10">
    <property type="entry name" value="Cystine-knot cytokines"/>
    <property type="match status" value="1"/>
</dbReference>
<dbReference type="InterPro" id="IPR029034">
    <property type="entry name" value="Cystine-knot_cytokine"/>
</dbReference>
<dbReference type="InterPro" id="IPR020408">
    <property type="entry name" value="Nerve_growth_factor-like"/>
</dbReference>
<dbReference type="InterPro" id="IPR002072">
    <property type="entry name" value="Nerve_growth_factor-rel"/>
</dbReference>
<dbReference type="InterPro" id="IPR015578">
    <property type="entry name" value="Neurotrophin-3"/>
</dbReference>
<dbReference type="InterPro" id="IPR045815">
    <property type="entry name" value="NTF3_N"/>
</dbReference>
<dbReference type="PANTHER" id="PTHR11589">
    <property type="entry name" value="NERVE GROWTH FACTOR NGF -RELATED"/>
    <property type="match status" value="1"/>
</dbReference>
<dbReference type="PANTHER" id="PTHR11589:SF4">
    <property type="entry name" value="NEUROTROPHIN-3"/>
    <property type="match status" value="1"/>
</dbReference>
<dbReference type="Pfam" id="PF00243">
    <property type="entry name" value="NGF"/>
    <property type="match status" value="1"/>
</dbReference>
<dbReference type="Pfam" id="PF19338">
    <property type="entry name" value="NTF3_N"/>
    <property type="match status" value="1"/>
</dbReference>
<dbReference type="PIRSF" id="PIRSF001789">
    <property type="entry name" value="NGF"/>
    <property type="match status" value="1"/>
</dbReference>
<dbReference type="PRINTS" id="PR01914">
    <property type="entry name" value="NEUROTROPHN3"/>
</dbReference>
<dbReference type="SMART" id="SM00140">
    <property type="entry name" value="NGF"/>
    <property type="match status" value="1"/>
</dbReference>
<dbReference type="SUPFAM" id="SSF57501">
    <property type="entry name" value="Cystine-knot cytokines"/>
    <property type="match status" value="1"/>
</dbReference>
<dbReference type="PROSITE" id="PS50270">
    <property type="entry name" value="NGF_2"/>
    <property type="match status" value="1"/>
</dbReference>
<reference key="1">
    <citation type="journal article" date="2006" name="Mol. Phylogenet. Evol.">
        <title>Dispersal and vicariance: the complex evolutionary history of boid snakes.</title>
        <authorList>
            <person name="Noonan B.P."/>
            <person name="Chippindale P.T."/>
        </authorList>
    </citation>
    <scope>NUCLEOTIDE SEQUENCE [GENOMIC DNA]</scope>
</reference>
<name>NTF3_EXIPL</name>
<sequence length="163" mass="18201">IQSTSMDQGILTEDSMNSFIRTLIQAGIWKNKVPKQTARTKDGMQTTVKKTEAEADAMASKGTRLGFQPVVSVDAELLRQQRRFSSPRVLLSENAPLQPPPLYLTEEPTVLNRTSRRKREGKSHRGEYSVCDSESRWVTDKSSAVDIRGHQVSVLGEIRMGPS</sequence>
<feature type="signal peptide" evidence="2">
    <location>
        <begin position="1" status="less than"/>
        <end position="3"/>
    </location>
</feature>
<feature type="propeptide" id="PRO_0000346737" evidence="1">
    <location>
        <begin position="4"/>
        <end position="119"/>
    </location>
</feature>
<feature type="chain" id="PRO_0000346738" description="Neurotrophin-3">
    <location>
        <begin position="120"/>
        <end position="163" status="greater than"/>
    </location>
</feature>
<feature type="region of interest" description="Disordered" evidence="3">
    <location>
        <begin position="112"/>
        <end position="132"/>
    </location>
</feature>
<feature type="compositionally biased region" description="Basic and acidic residues" evidence="3">
    <location>
        <begin position="123"/>
        <end position="132"/>
    </location>
</feature>
<feature type="glycosylation site" description="N-linked (GlcNAc...) asparagine" evidence="2">
    <location>
        <position position="112"/>
    </location>
</feature>
<feature type="non-terminal residue">
    <location>
        <position position="1"/>
    </location>
</feature>
<feature type="non-terminal residue">
    <location>
        <position position="163"/>
    </location>
</feature>
<keyword id="KW-0165">Cleavage on pair of basic residues</keyword>
<keyword id="KW-0325">Glycoprotein</keyword>
<keyword id="KW-0339">Growth factor</keyword>
<keyword id="KW-0964">Secreted</keyword>
<keyword id="KW-0732">Signal</keyword>
<comment type="function">
    <text evidence="1">Seems to promote the survival of visceral and proprioceptive sensory neurons.</text>
</comment>
<comment type="subcellular location">
    <subcellularLocation>
        <location evidence="1">Secreted</location>
    </subcellularLocation>
</comment>
<comment type="similarity">
    <text evidence="4">Belongs to the NGF-beta family.</text>
</comment>
<organism>
    <name type="scientific">Exiliboa placata</name>
    <name type="common">Oaxacan dwarf boa</name>
    <dbReference type="NCBI Taxonomy" id="196258"/>
    <lineage>
        <taxon>Eukaryota</taxon>
        <taxon>Metazoa</taxon>
        <taxon>Chordata</taxon>
        <taxon>Craniata</taxon>
        <taxon>Vertebrata</taxon>
        <taxon>Euteleostomi</taxon>
        <taxon>Lepidosauria</taxon>
        <taxon>Squamata</taxon>
        <taxon>Bifurcata</taxon>
        <taxon>Unidentata</taxon>
        <taxon>Episquamata</taxon>
        <taxon>Toxicofera</taxon>
        <taxon>Serpentes</taxon>
        <taxon>Henophidia</taxon>
        <taxon>Tropidophiidae</taxon>
        <taxon>Exiliboa</taxon>
    </lineage>
</organism>
<gene>
    <name type="primary">NTF3</name>
</gene>
<protein>
    <recommendedName>
        <fullName>Neurotrophin-3</fullName>
        <shortName>NT-3</shortName>
    </recommendedName>
</protein>
<proteinExistence type="inferred from homology"/>